<name>TSGA_YERPE</name>
<protein>
    <recommendedName>
        <fullName evidence="1">Protein TsgA homolog</fullName>
    </recommendedName>
</protein>
<accession>Q8ZJE6</accession>
<accession>Q0WKD9</accession>
<organism>
    <name type="scientific">Yersinia pestis</name>
    <dbReference type="NCBI Taxonomy" id="632"/>
    <lineage>
        <taxon>Bacteria</taxon>
        <taxon>Pseudomonadati</taxon>
        <taxon>Pseudomonadota</taxon>
        <taxon>Gammaproteobacteria</taxon>
        <taxon>Enterobacterales</taxon>
        <taxon>Yersiniaceae</taxon>
        <taxon>Yersinia</taxon>
    </lineage>
</organism>
<reference key="1">
    <citation type="journal article" date="2001" name="Nature">
        <title>Genome sequence of Yersinia pestis, the causative agent of plague.</title>
        <authorList>
            <person name="Parkhill J."/>
            <person name="Wren B.W."/>
            <person name="Thomson N.R."/>
            <person name="Titball R.W."/>
            <person name="Holden M.T.G."/>
            <person name="Prentice M.B."/>
            <person name="Sebaihia M."/>
            <person name="James K.D."/>
            <person name="Churcher C.M."/>
            <person name="Mungall K.L."/>
            <person name="Baker S."/>
            <person name="Basham D."/>
            <person name="Bentley S.D."/>
            <person name="Brooks K."/>
            <person name="Cerdeno-Tarraga A.-M."/>
            <person name="Chillingworth T."/>
            <person name="Cronin A."/>
            <person name="Davies R.M."/>
            <person name="Davis P."/>
            <person name="Dougan G."/>
            <person name="Feltwell T."/>
            <person name="Hamlin N."/>
            <person name="Holroyd S."/>
            <person name="Jagels K."/>
            <person name="Karlyshev A.V."/>
            <person name="Leather S."/>
            <person name="Moule S."/>
            <person name="Oyston P.C.F."/>
            <person name="Quail M.A."/>
            <person name="Rutherford K.M."/>
            <person name="Simmonds M."/>
            <person name="Skelton J."/>
            <person name="Stevens K."/>
            <person name="Whitehead S."/>
            <person name="Barrell B.G."/>
        </authorList>
    </citation>
    <scope>NUCLEOTIDE SEQUENCE [LARGE SCALE GENOMIC DNA]</scope>
    <source>
        <strain>CO-92 / Biovar Orientalis</strain>
    </source>
</reference>
<reference key="2">
    <citation type="journal article" date="2002" name="J. Bacteriol.">
        <title>Genome sequence of Yersinia pestis KIM.</title>
        <authorList>
            <person name="Deng W."/>
            <person name="Burland V."/>
            <person name="Plunkett G. III"/>
            <person name="Boutin A."/>
            <person name="Mayhew G.F."/>
            <person name="Liss P."/>
            <person name="Perna N.T."/>
            <person name="Rose D.J."/>
            <person name="Mau B."/>
            <person name="Zhou S."/>
            <person name="Schwartz D.C."/>
            <person name="Fetherston J.D."/>
            <person name="Lindler L.E."/>
            <person name="Brubaker R.R."/>
            <person name="Plano G.V."/>
            <person name="Straley S.C."/>
            <person name="McDonough K.A."/>
            <person name="Nilles M.L."/>
            <person name="Matson J.S."/>
            <person name="Blattner F.R."/>
            <person name="Perry R.D."/>
        </authorList>
    </citation>
    <scope>NUCLEOTIDE SEQUENCE [LARGE SCALE GENOMIC DNA]</scope>
    <source>
        <strain>KIM10+ / Biovar Mediaevalis</strain>
    </source>
</reference>
<reference key="3">
    <citation type="journal article" date="2004" name="DNA Res.">
        <title>Complete genome sequence of Yersinia pestis strain 91001, an isolate avirulent to humans.</title>
        <authorList>
            <person name="Song Y."/>
            <person name="Tong Z."/>
            <person name="Wang J."/>
            <person name="Wang L."/>
            <person name="Guo Z."/>
            <person name="Han Y."/>
            <person name="Zhang J."/>
            <person name="Pei D."/>
            <person name="Zhou D."/>
            <person name="Qin H."/>
            <person name="Pang X."/>
            <person name="Han Y."/>
            <person name="Zhai J."/>
            <person name="Li M."/>
            <person name="Cui B."/>
            <person name="Qi Z."/>
            <person name="Jin L."/>
            <person name="Dai R."/>
            <person name="Chen F."/>
            <person name="Li S."/>
            <person name="Ye C."/>
            <person name="Du Z."/>
            <person name="Lin W."/>
            <person name="Wang J."/>
            <person name="Yu J."/>
            <person name="Yang H."/>
            <person name="Wang J."/>
            <person name="Huang P."/>
            <person name="Yang R."/>
        </authorList>
    </citation>
    <scope>NUCLEOTIDE SEQUENCE [LARGE SCALE GENOMIC DNA]</scope>
    <source>
        <strain>91001 / Biovar Mediaevalis</strain>
    </source>
</reference>
<gene>
    <name evidence="1" type="primary">tsgA</name>
    <name type="synonym">proP2</name>
    <name type="ordered locus">YPO0163</name>
    <name type="ordered locus">y3947</name>
    <name type="ordered locus">YP_0165</name>
</gene>
<comment type="subcellular location">
    <subcellularLocation>
        <location evidence="1">Cell inner membrane</location>
        <topology evidence="1">Multi-pass membrane protein</topology>
    </subcellularLocation>
</comment>
<comment type="similarity">
    <text evidence="1">Belongs to the major facilitator superfamily. TsgA family.</text>
</comment>
<feature type="chain" id="PRO_0000206502" description="Protein TsgA homolog">
    <location>
        <begin position="1"/>
        <end position="394"/>
    </location>
</feature>
<feature type="transmembrane region" description="Helical" evidence="1">
    <location>
        <begin position="11"/>
        <end position="31"/>
    </location>
</feature>
<feature type="transmembrane region" description="Helical" evidence="1">
    <location>
        <begin position="51"/>
        <end position="71"/>
    </location>
</feature>
<feature type="transmembrane region" description="Helical" evidence="1">
    <location>
        <begin position="76"/>
        <end position="96"/>
    </location>
</feature>
<feature type="transmembrane region" description="Helical" evidence="1">
    <location>
        <begin position="101"/>
        <end position="121"/>
    </location>
</feature>
<feature type="transmembrane region" description="Helical" evidence="1">
    <location>
        <begin position="134"/>
        <end position="154"/>
    </location>
</feature>
<feature type="transmembrane region" description="Helical" evidence="1">
    <location>
        <begin position="162"/>
        <end position="182"/>
    </location>
</feature>
<feature type="transmembrane region" description="Helical" evidence="1">
    <location>
        <begin position="206"/>
        <end position="226"/>
    </location>
</feature>
<feature type="transmembrane region" description="Helical" evidence="1">
    <location>
        <begin position="246"/>
        <end position="266"/>
    </location>
</feature>
<feature type="transmembrane region" description="Helical" evidence="1">
    <location>
        <begin position="274"/>
        <end position="294"/>
    </location>
</feature>
<feature type="transmembrane region" description="Helical" evidence="1">
    <location>
        <begin position="302"/>
        <end position="322"/>
    </location>
</feature>
<feature type="transmembrane region" description="Helical" evidence="1">
    <location>
        <begin position="334"/>
        <end position="354"/>
    </location>
</feature>
<feature type="transmembrane region" description="Helical" evidence="1">
    <location>
        <begin position="363"/>
        <end position="383"/>
    </location>
</feature>
<sequence>MNNSNRIRLTWISYLSYALTGALVIVTGIVMGNIAEYFNLPIASMSNTFTFLNAGILISIFLNAWLMEIIPLKRQLVFGFILMLIAIAGLMVGHNLMIFSISMFIFGVVSGITMSIGTFLVTHMYEGRQRGSRLLFTDSFFSMAGMIFPIAAAMLLARHIEWYWVYACIGLLYVGIFVLTLCSEFPVLGHKATDQSKPVVKEKWGVGVLFLAIAALCYILGQLGFIQWVPEYATKTFNMNISQAGQLVSNFWISYMIGMWIFSFILRFFDLQRIVTVLAAMATLAMYLFVSTDNPAYLSYYILALGFVSSAIYTTLITLGSLQTKVSSPKLVNFILTCGTVGTMLTFVVTGPIVANNGVHAALETANGLYLAVFILCLALGFFTKHRSHGHVTH</sequence>
<proteinExistence type="inferred from homology"/>
<evidence type="ECO:0000255" key="1">
    <source>
        <dbReference type="HAMAP-Rule" id="MF_01044"/>
    </source>
</evidence>
<dbReference type="EMBL" id="AL590842">
    <property type="protein sequence ID" value="CAL18849.1"/>
    <property type="molecule type" value="Genomic_DNA"/>
</dbReference>
<dbReference type="EMBL" id="AE009952">
    <property type="protein sequence ID" value="AAM87491.1"/>
    <property type="molecule type" value="Genomic_DNA"/>
</dbReference>
<dbReference type="EMBL" id="AE017042">
    <property type="protein sequence ID" value="AAS60443.1"/>
    <property type="molecule type" value="Genomic_DNA"/>
</dbReference>
<dbReference type="PIR" id="AH0020">
    <property type="entry name" value="AH0020"/>
</dbReference>
<dbReference type="RefSeq" id="WP_002215690.1">
    <property type="nucleotide sequence ID" value="NZ_WUCM01000004.1"/>
</dbReference>
<dbReference type="RefSeq" id="YP_002345249.1">
    <property type="nucleotide sequence ID" value="NC_003143.1"/>
</dbReference>
<dbReference type="SMR" id="Q8ZJE6"/>
<dbReference type="STRING" id="214092.YPO0163"/>
<dbReference type="PaxDb" id="214092-YPO0163"/>
<dbReference type="DNASU" id="1148894"/>
<dbReference type="EnsemblBacteria" id="AAS60443">
    <property type="protein sequence ID" value="AAS60443"/>
    <property type="gene ID" value="YP_0165"/>
</dbReference>
<dbReference type="GeneID" id="57974438"/>
<dbReference type="KEGG" id="ype:YPO0163"/>
<dbReference type="KEGG" id="ypk:y3947"/>
<dbReference type="KEGG" id="ypm:YP_0165"/>
<dbReference type="PATRIC" id="fig|214092.21.peg.393"/>
<dbReference type="eggNOG" id="COG0738">
    <property type="taxonomic scope" value="Bacteria"/>
</dbReference>
<dbReference type="HOGENOM" id="CLU_056916_0_0_6"/>
<dbReference type="OMA" id="FIVTGPI"/>
<dbReference type="OrthoDB" id="8577032at2"/>
<dbReference type="Proteomes" id="UP000000815">
    <property type="component" value="Chromosome"/>
</dbReference>
<dbReference type="Proteomes" id="UP000001019">
    <property type="component" value="Chromosome"/>
</dbReference>
<dbReference type="Proteomes" id="UP000002490">
    <property type="component" value="Chromosome"/>
</dbReference>
<dbReference type="GO" id="GO:0005886">
    <property type="term" value="C:plasma membrane"/>
    <property type="evidence" value="ECO:0007669"/>
    <property type="project" value="UniProtKB-SubCell"/>
</dbReference>
<dbReference type="GO" id="GO:0022857">
    <property type="term" value="F:transmembrane transporter activity"/>
    <property type="evidence" value="ECO:0007669"/>
    <property type="project" value="InterPro"/>
</dbReference>
<dbReference type="Gene3D" id="1.20.1250.20">
    <property type="entry name" value="MFS general substrate transporter like domains"/>
    <property type="match status" value="2"/>
</dbReference>
<dbReference type="HAMAP" id="MF_01044">
    <property type="entry name" value="MFS_TsgA"/>
    <property type="match status" value="1"/>
</dbReference>
<dbReference type="InterPro" id="IPR011701">
    <property type="entry name" value="MFS"/>
</dbReference>
<dbReference type="InterPro" id="IPR020846">
    <property type="entry name" value="MFS_dom"/>
</dbReference>
<dbReference type="InterPro" id="IPR036259">
    <property type="entry name" value="MFS_trans_sf"/>
</dbReference>
<dbReference type="InterPro" id="IPR023528">
    <property type="entry name" value="MFS_TsgA"/>
</dbReference>
<dbReference type="InterPro" id="IPR050375">
    <property type="entry name" value="MFS_TsgA-like"/>
</dbReference>
<dbReference type="NCBIfam" id="NF002982">
    <property type="entry name" value="PRK03699.1"/>
    <property type="match status" value="1"/>
</dbReference>
<dbReference type="PANTHER" id="PTHR43702">
    <property type="entry name" value="L-FUCOSE-PROTON SYMPORTER"/>
    <property type="match status" value="1"/>
</dbReference>
<dbReference type="PANTHER" id="PTHR43702:SF3">
    <property type="entry name" value="PROTEIN TSGA"/>
    <property type="match status" value="1"/>
</dbReference>
<dbReference type="Pfam" id="PF07690">
    <property type="entry name" value="MFS_1"/>
    <property type="match status" value="1"/>
</dbReference>
<dbReference type="SUPFAM" id="SSF103473">
    <property type="entry name" value="MFS general substrate transporter"/>
    <property type="match status" value="1"/>
</dbReference>
<dbReference type="PROSITE" id="PS50850">
    <property type="entry name" value="MFS"/>
    <property type="match status" value="1"/>
</dbReference>
<keyword id="KW-0997">Cell inner membrane</keyword>
<keyword id="KW-1003">Cell membrane</keyword>
<keyword id="KW-0472">Membrane</keyword>
<keyword id="KW-1185">Reference proteome</keyword>
<keyword id="KW-0812">Transmembrane</keyword>
<keyword id="KW-1133">Transmembrane helix</keyword>